<feature type="chain" id="PRO_0000339677" description="Xanthine phosphoribosyltransferase">
    <location>
        <begin position="1"/>
        <end position="189"/>
    </location>
</feature>
<feature type="binding site" evidence="1">
    <location>
        <position position="20"/>
    </location>
    <ligand>
        <name>xanthine</name>
        <dbReference type="ChEBI" id="CHEBI:17712"/>
    </ligand>
</feature>
<feature type="binding site" evidence="1">
    <location>
        <position position="27"/>
    </location>
    <ligand>
        <name>xanthine</name>
        <dbReference type="ChEBI" id="CHEBI:17712"/>
    </ligand>
</feature>
<feature type="binding site" evidence="1">
    <location>
        <begin position="128"/>
        <end position="132"/>
    </location>
    <ligand>
        <name>5-phospho-alpha-D-ribose 1-diphosphate</name>
        <dbReference type="ChEBI" id="CHEBI:58017"/>
    </ligand>
</feature>
<feature type="binding site" evidence="1">
    <location>
        <position position="156"/>
    </location>
    <ligand>
        <name>xanthine</name>
        <dbReference type="ChEBI" id="CHEBI:17712"/>
    </ligand>
</feature>
<proteinExistence type="inferred from homology"/>
<dbReference type="EC" id="2.4.2.22" evidence="1"/>
<dbReference type="EMBL" id="AE001437">
    <property type="protein sequence ID" value="AAK78849.1"/>
    <property type="molecule type" value="Genomic_DNA"/>
</dbReference>
<dbReference type="PIR" id="F97007">
    <property type="entry name" value="F97007"/>
</dbReference>
<dbReference type="RefSeq" id="NP_347509.1">
    <property type="nucleotide sequence ID" value="NC_003030.1"/>
</dbReference>
<dbReference type="RefSeq" id="WP_010964191.1">
    <property type="nucleotide sequence ID" value="NC_003030.1"/>
</dbReference>
<dbReference type="SMR" id="Q97KP4"/>
<dbReference type="STRING" id="272562.CA_C0873"/>
<dbReference type="KEGG" id="cac:CA_C0873"/>
<dbReference type="PATRIC" id="fig|272562.8.peg.1083"/>
<dbReference type="eggNOG" id="COG0503">
    <property type="taxonomic scope" value="Bacteria"/>
</dbReference>
<dbReference type="HOGENOM" id="CLU_099015_0_0_9"/>
<dbReference type="OrthoDB" id="9790678at2"/>
<dbReference type="UniPathway" id="UPA00602">
    <property type="reaction ID" value="UER00658"/>
</dbReference>
<dbReference type="Proteomes" id="UP000000814">
    <property type="component" value="Chromosome"/>
</dbReference>
<dbReference type="GO" id="GO:0005737">
    <property type="term" value="C:cytoplasm"/>
    <property type="evidence" value="ECO:0007669"/>
    <property type="project" value="UniProtKB-SubCell"/>
</dbReference>
<dbReference type="GO" id="GO:0000310">
    <property type="term" value="F:xanthine phosphoribosyltransferase activity"/>
    <property type="evidence" value="ECO:0007669"/>
    <property type="project" value="UniProtKB-UniRule"/>
</dbReference>
<dbReference type="GO" id="GO:0006166">
    <property type="term" value="P:purine ribonucleoside salvage"/>
    <property type="evidence" value="ECO:0007669"/>
    <property type="project" value="UniProtKB-KW"/>
</dbReference>
<dbReference type="GO" id="GO:0046110">
    <property type="term" value="P:xanthine metabolic process"/>
    <property type="evidence" value="ECO:0007669"/>
    <property type="project" value="InterPro"/>
</dbReference>
<dbReference type="GO" id="GO:0032265">
    <property type="term" value="P:XMP salvage"/>
    <property type="evidence" value="ECO:0007669"/>
    <property type="project" value="UniProtKB-UniRule"/>
</dbReference>
<dbReference type="CDD" id="cd06223">
    <property type="entry name" value="PRTases_typeI"/>
    <property type="match status" value="1"/>
</dbReference>
<dbReference type="Gene3D" id="3.40.50.2020">
    <property type="match status" value="1"/>
</dbReference>
<dbReference type="HAMAP" id="MF_01184">
    <property type="entry name" value="XPRTase"/>
    <property type="match status" value="1"/>
</dbReference>
<dbReference type="InterPro" id="IPR000836">
    <property type="entry name" value="PRibTrfase_dom"/>
</dbReference>
<dbReference type="InterPro" id="IPR029057">
    <property type="entry name" value="PRTase-like"/>
</dbReference>
<dbReference type="InterPro" id="IPR050118">
    <property type="entry name" value="Pur/Pyrimidine_PRTase"/>
</dbReference>
<dbReference type="InterPro" id="IPR010079">
    <property type="entry name" value="Xanthine_PRibTrfase"/>
</dbReference>
<dbReference type="NCBIfam" id="NF006671">
    <property type="entry name" value="PRK09219.1"/>
    <property type="match status" value="1"/>
</dbReference>
<dbReference type="NCBIfam" id="TIGR01744">
    <property type="entry name" value="XPRTase"/>
    <property type="match status" value="1"/>
</dbReference>
<dbReference type="PANTHER" id="PTHR43864">
    <property type="entry name" value="HYPOXANTHINE/GUANINE PHOSPHORIBOSYLTRANSFERASE"/>
    <property type="match status" value="1"/>
</dbReference>
<dbReference type="PANTHER" id="PTHR43864:SF1">
    <property type="entry name" value="XANTHINE PHOSPHORIBOSYLTRANSFERASE"/>
    <property type="match status" value="1"/>
</dbReference>
<dbReference type="Pfam" id="PF00156">
    <property type="entry name" value="Pribosyltran"/>
    <property type="match status" value="1"/>
</dbReference>
<dbReference type="SUPFAM" id="SSF53271">
    <property type="entry name" value="PRTase-like"/>
    <property type="match status" value="1"/>
</dbReference>
<gene>
    <name evidence="1" type="primary">xpt</name>
    <name type="ordered locus">CA_C0873</name>
</gene>
<organism>
    <name type="scientific">Clostridium acetobutylicum (strain ATCC 824 / DSM 792 / JCM 1419 / IAM 19013 / LMG 5710 / NBRC 13948 / NRRL B-527 / VKM B-1787 / 2291 / W)</name>
    <dbReference type="NCBI Taxonomy" id="272562"/>
    <lineage>
        <taxon>Bacteria</taxon>
        <taxon>Bacillati</taxon>
        <taxon>Bacillota</taxon>
        <taxon>Clostridia</taxon>
        <taxon>Eubacteriales</taxon>
        <taxon>Clostridiaceae</taxon>
        <taxon>Clostridium</taxon>
    </lineage>
</organism>
<protein>
    <recommendedName>
        <fullName evidence="1">Xanthine phosphoribosyltransferase</fullName>
        <shortName evidence="1">XPRTase</shortName>
        <ecNumber evidence="1">2.4.2.22</ecNumber>
    </recommendedName>
</protein>
<reference key="1">
    <citation type="journal article" date="2001" name="J. Bacteriol.">
        <title>Genome sequence and comparative analysis of the solvent-producing bacterium Clostridium acetobutylicum.</title>
        <authorList>
            <person name="Noelling J."/>
            <person name="Breton G."/>
            <person name="Omelchenko M.V."/>
            <person name="Makarova K.S."/>
            <person name="Zeng Q."/>
            <person name="Gibson R."/>
            <person name="Lee H.M."/>
            <person name="Dubois J."/>
            <person name="Qiu D."/>
            <person name="Hitti J."/>
            <person name="Wolf Y.I."/>
            <person name="Tatusov R.L."/>
            <person name="Sabathe F."/>
            <person name="Doucette-Stamm L.A."/>
            <person name="Soucaille P."/>
            <person name="Daly M.J."/>
            <person name="Bennett G.N."/>
            <person name="Koonin E.V."/>
            <person name="Smith D.R."/>
        </authorList>
    </citation>
    <scope>NUCLEOTIDE SEQUENCE [LARGE SCALE GENOMIC DNA]</scope>
    <source>
        <strain>ATCC 824 / DSM 792 / JCM 1419 / IAM 19013 / LMG 5710 / NBRC 13948 / NRRL B-527 / VKM B-1787 / 2291 / W</strain>
    </source>
</reference>
<evidence type="ECO:0000255" key="1">
    <source>
        <dbReference type="HAMAP-Rule" id="MF_01184"/>
    </source>
</evidence>
<keyword id="KW-0963">Cytoplasm</keyword>
<keyword id="KW-0328">Glycosyltransferase</keyword>
<keyword id="KW-0660">Purine salvage</keyword>
<keyword id="KW-1185">Reference proteome</keyword>
<keyword id="KW-0808">Transferase</keyword>
<name>XPT_CLOAB</name>
<sequence>MEQLCKRILEEGKALNEYVLKVDSFLNHNVDPKLMYEIGTYFKEYFSARGITKIFTIESSGIAPAVMTALQMDIPMVILKKQKPNTLTEDVYQTTVHSFTKGSDYELTLLKKYISDKDKILIIDDFLANGEASLGAVRLVETAGAEVSGIGIVIEKSFQKGRKCLEEKGYDIYSLARIKKLGKDLIEFL</sequence>
<comment type="function">
    <text evidence="1">Converts the preformed base xanthine, a product of nucleic acid breakdown, to xanthosine 5'-monophosphate (XMP), so it can be reused for RNA or DNA synthesis.</text>
</comment>
<comment type="catalytic activity">
    <reaction evidence="1">
        <text>XMP + diphosphate = xanthine + 5-phospho-alpha-D-ribose 1-diphosphate</text>
        <dbReference type="Rhea" id="RHEA:10800"/>
        <dbReference type="ChEBI" id="CHEBI:17712"/>
        <dbReference type="ChEBI" id="CHEBI:33019"/>
        <dbReference type="ChEBI" id="CHEBI:57464"/>
        <dbReference type="ChEBI" id="CHEBI:58017"/>
        <dbReference type="EC" id="2.4.2.22"/>
    </reaction>
</comment>
<comment type="pathway">
    <text evidence="1">Purine metabolism; XMP biosynthesis via salvage pathway; XMP from xanthine: step 1/1.</text>
</comment>
<comment type="subunit">
    <text evidence="1">Homodimer.</text>
</comment>
<comment type="subcellular location">
    <subcellularLocation>
        <location evidence="1">Cytoplasm</location>
    </subcellularLocation>
</comment>
<comment type="similarity">
    <text evidence="1">Belongs to the purine/pyrimidine phosphoribosyltransferase family. Xpt subfamily.</text>
</comment>
<accession>Q97KP4</accession>